<dbReference type="EMBL" id="AJ251064">
    <property type="protein sequence ID" value="CAB92130.1"/>
    <property type="molecule type" value="Genomic_DNA"/>
</dbReference>
<dbReference type="SMR" id="Q9M4C0"/>
<dbReference type="GO" id="GO:0009507">
    <property type="term" value="C:chloroplast"/>
    <property type="evidence" value="ECO:0007669"/>
    <property type="project" value="UniProtKB-SubCell"/>
</dbReference>
<dbReference type="GO" id="GO:0015935">
    <property type="term" value="C:small ribosomal subunit"/>
    <property type="evidence" value="ECO:0007669"/>
    <property type="project" value="InterPro"/>
</dbReference>
<dbReference type="GO" id="GO:0019843">
    <property type="term" value="F:rRNA binding"/>
    <property type="evidence" value="ECO:0007669"/>
    <property type="project" value="UniProtKB-UniRule"/>
</dbReference>
<dbReference type="GO" id="GO:0003735">
    <property type="term" value="F:structural constituent of ribosome"/>
    <property type="evidence" value="ECO:0007669"/>
    <property type="project" value="InterPro"/>
</dbReference>
<dbReference type="GO" id="GO:0042274">
    <property type="term" value="P:ribosomal small subunit biogenesis"/>
    <property type="evidence" value="ECO:0007669"/>
    <property type="project" value="TreeGrafter"/>
</dbReference>
<dbReference type="GO" id="GO:0006412">
    <property type="term" value="P:translation"/>
    <property type="evidence" value="ECO:0007669"/>
    <property type="project" value="UniProtKB-UniRule"/>
</dbReference>
<dbReference type="CDD" id="cd00165">
    <property type="entry name" value="S4"/>
    <property type="match status" value="1"/>
</dbReference>
<dbReference type="FunFam" id="1.10.1050.10:FF:000002">
    <property type="entry name" value="30S ribosomal protein S4, chloroplastic"/>
    <property type="match status" value="1"/>
</dbReference>
<dbReference type="FunFam" id="3.10.290.10:FF:000081">
    <property type="entry name" value="30S ribosomal protein S4, chloroplastic"/>
    <property type="match status" value="1"/>
</dbReference>
<dbReference type="Gene3D" id="1.10.1050.10">
    <property type="entry name" value="Ribosomal Protein S4 Delta 41, Chain A, domain 1"/>
    <property type="match status" value="1"/>
</dbReference>
<dbReference type="Gene3D" id="3.10.290.10">
    <property type="entry name" value="RNA-binding S4 domain"/>
    <property type="match status" value="1"/>
</dbReference>
<dbReference type="HAMAP" id="MF_01306_B">
    <property type="entry name" value="Ribosomal_uS4_B"/>
    <property type="match status" value="1"/>
</dbReference>
<dbReference type="InterPro" id="IPR022801">
    <property type="entry name" value="Ribosomal_uS4"/>
</dbReference>
<dbReference type="InterPro" id="IPR005709">
    <property type="entry name" value="Ribosomal_uS4_bac-type"/>
</dbReference>
<dbReference type="InterPro" id="IPR018079">
    <property type="entry name" value="Ribosomal_uS4_CS"/>
</dbReference>
<dbReference type="InterPro" id="IPR001912">
    <property type="entry name" value="Ribosomal_uS4_N"/>
</dbReference>
<dbReference type="InterPro" id="IPR002942">
    <property type="entry name" value="S4_RNA-bd"/>
</dbReference>
<dbReference type="InterPro" id="IPR036986">
    <property type="entry name" value="S4_RNA-bd_sf"/>
</dbReference>
<dbReference type="NCBIfam" id="NF003717">
    <property type="entry name" value="PRK05327.1"/>
    <property type="match status" value="1"/>
</dbReference>
<dbReference type="NCBIfam" id="TIGR01017">
    <property type="entry name" value="rpsD_bact"/>
    <property type="match status" value="1"/>
</dbReference>
<dbReference type="PANTHER" id="PTHR11831">
    <property type="entry name" value="30S 40S RIBOSOMAL PROTEIN"/>
    <property type="match status" value="1"/>
</dbReference>
<dbReference type="PANTHER" id="PTHR11831:SF4">
    <property type="entry name" value="SMALL RIBOSOMAL SUBUNIT PROTEIN US4M"/>
    <property type="match status" value="1"/>
</dbReference>
<dbReference type="Pfam" id="PF00163">
    <property type="entry name" value="Ribosomal_S4"/>
    <property type="match status" value="1"/>
</dbReference>
<dbReference type="Pfam" id="PF01479">
    <property type="entry name" value="S4"/>
    <property type="match status" value="1"/>
</dbReference>
<dbReference type="SMART" id="SM01390">
    <property type="entry name" value="Ribosomal_S4"/>
    <property type="match status" value="1"/>
</dbReference>
<dbReference type="SMART" id="SM00363">
    <property type="entry name" value="S4"/>
    <property type="match status" value="1"/>
</dbReference>
<dbReference type="SUPFAM" id="SSF55174">
    <property type="entry name" value="Alpha-L RNA-binding motif"/>
    <property type="match status" value="1"/>
</dbReference>
<dbReference type="PROSITE" id="PS00632">
    <property type="entry name" value="RIBOSOMAL_S4"/>
    <property type="match status" value="1"/>
</dbReference>
<dbReference type="PROSITE" id="PS50889">
    <property type="entry name" value="S4"/>
    <property type="match status" value="1"/>
</dbReference>
<proteinExistence type="inferred from homology"/>
<sequence>MSRYRGPRMKIIRRLGSLPGLTNKVLRSKPGYTDQLISNKKVSQYRIRLEEKQKLRFHYGLTERQLLKYVRIARKAKGSTGNVLLQLLEMRLDNVIFRLGMSSTIPGARQLVNHRHIMINDEMVDTPGYNCKPRDIITLKNISESRSGIPKGIDSSQRSRTPNHLVFDSSRGVGFVNQIIDREWISLKINELLVVEYYSRQA</sequence>
<evidence type="ECO:0000250" key="1"/>
<evidence type="ECO:0000305" key="2"/>
<gene>
    <name type="primary">rps4</name>
</gene>
<accession>Q9M4C0</accession>
<organism>
    <name type="scientific">Haplomitrium hookeri</name>
    <name type="common">Hooker's flapwort</name>
    <name type="synonym">Jungermannia hookeri</name>
    <dbReference type="NCBI Taxonomy" id="37406"/>
    <lineage>
        <taxon>Eukaryota</taxon>
        <taxon>Viridiplantae</taxon>
        <taxon>Streptophyta</taxon>
        <taxon>Embryophyta</taxon>
        <taxon>Marchantiophyta</taxon>
        <taxon>Haplomitriopsida</taxon>
        <taxon>Haplomitriidae</taxon>
        <taxon>Calobryales</taxon>
        <taxon>Haplomitriaceae</taxon>
        <taxon>Haplomitrium</taxon>
    </lineage>
</organism>
<name>RR4_HAPHO</name>
<protein>
    <recommendedName>
        <fullName evidence="2">Small ribosomal subunit protein uS4c</fullName>
    </recommendedName>
    <alternativeName>
        <fullName>30S ribosomal protein S4, chloroplastic</fullName>
    </alternativeName>
</protein>
<comment type="function">
    <text evidence="1">One of the primary rRNA binding proteins, it binds directly to 16S rRNA where it nucleates assembly of the body of the 30S subunit.</text>
</comment>
<comment type="function">
    <text evidence="1">With S5 and S12 plays an important role in translational accuracy.</text>
</comment>
<comment type="subunit">
    <text evidence="1">Part of the 30S ribosomal subunit. Contacts protein S5. The interaction surface between S4 and S5 is involved in control of translational fidelity (By similarity).</text>
</comment>
<comment type="subcellular location">
    <subcellularLocation>
        <location>Plastid</location>
        <location>Chloroplast</location>
    </subcellularLocation>
</comment>
<comment type="similarity">
    <text evidence="2">Belongs to the universal ribosomal protein uS4 family.</text>
</comment>
<feature type="chain" id="PRO_0000132598" description="Small ribosomal subunit protein uS4c">
    <location>
        <begin position="1"/>
        <end position="202"/>
    </location>
</feature>
<feature type="domain" description="S4 RNA-binding">
    <location>
        <begin position="90"/>
        <end position="148"/>
    </location>
</feature>
<reference key="1">
    <citation type="submission" date="1999-11" db="EMBL/GenBank/DDBJ databases">
        <title>A molecular approach to bryophyte systematics.</title>
        <authorList>
            <person name="Capesius I."/>
            <person name="Bloecher R."/>
        </authorList>
    </citation>
    <scope>NUCLEOTIDE SEQUENCE [GENOMIC DNA]</scope>
    <source>
        <tissue>Gametophyte</tissue>
    </source>
</reference>
<keyword id="KW-0150">Chloroplast</keyword>
<keyword id="KW-0934">Plastid</keyword>
<keyword id="KW-0687">Ribonucleoprotein</keyword>
<keyword id="KW-0689">Ribosomal protein</keyword>
<keyword id="KW-0694">RNA-binding</keyword>
<keyword id="KW-0699">rRNA-binding</keyword>
<geneLocation type="chloroplast"/>